<reference key="1">
    <citation type="journal article" date="2006" name="Genome Res.">
        <title>Massive genome erosion and functional adaptations provide insights into the symbiotic lifestyle of Sodalis glossinidius in the tsetse host.</title>
        <authorList>
            <person name="Toh H."/>
            <person name="Weiss B.L."/>
            <person name="Perkin S.A.H."/>
            <person name="Yamashita A."/>
            <person name="Oshima K."/>
            <person name="Hattori M."/>
            <person name="Aksoy S."/>
        </authorList>
    </citation>
    <scope>NUCLEOTIDE SEQUENCE [LARGE SCALE GENOMIC DNA]</scope>
    <source>
        <strain>morsitans</strain>
    </source>
</reference>
<accession>Q2NW25</accession>
<organism>
    <name type="scientific">Sodalis glossinidius (strain morsitans)</name>
    <dbReference type="NCBI Taxonomy" id="343509"/>
    <lineage>
        <taxon>Bacteria</taxon>
        <taxon>Pseudomonadati</taxon>
        <taxon>Pseudomonadota</taxon>
        <taxon>Gammaproteobacteria</taxon>
        <taxon>Enterobacterales</taxon>
        <taxon>Bruguierivoracaceae</taxon>
        <taxon>Sodalis</taxon>
    </lineage>
</organism>
<keyword id="KW-0963">Cytoplasm</keyword>
<keyword id="KW-0690">Ribosome biogenesis</keyword>
<name>RIMP_SODGM</name>
<proteinExistence type="inferred from homology"/>
<sequence>MALSTLEQKLTEMITAPVEALGFELVGIEFIRGRQSTLRIYINSDEGITVDDCADVSHQVSAVLDVEDPISVAYSLEVSSPGLDRPLFTAAHYRQFIGSDVSVVLRIAVQNRRKWQGIIKAVDGEMITVTVDGKDEVFALQNIQKANLVPHF</sequence>
<feature type="chain" id="PRO_0000384775" description="Ribosome maturation factor RimP">
    <location>
        <begin position="1"/>
        <end position="152"/>
    </location>
</feature>
<protein>
    <recommendedName>
        <fullName evidence="1">Ribosome maturation factor RimP</fullName>
    </recommendedName>
</protein>
<comment type="function">
    <text evidence="1">Required for maturation of 30S ribosomal subunits.</text>
</comment>
<comment type="subcellular location">
    <subcellularLocation>
        <location evidence="1">Cytoplasm</location>
    </subcellularLocation>
</comment>
<comment type="similarity">
    <text evidence="1">Belongs to the RimP family.</text>
</comment>
<comment type="sequence caution" evidence="2">
    <conflict type="erroneous initiation">
        <sequence resource="EMBL-CDS" id="BAE73650"/>
    </conflict>
</comment>
<evidence type="ECO:0000255" key="1">
    <source>
        <dbReference type="HAMAP-Rule" id="MF_01077"/>
    </source>
</evidence>
<evidence type="ECO:0000305" key="2"/>
<dbReference type="EMBL" id="AP008232">
    <property type="protein sequence ID" value="BAE73650.1"/>
    <property type="status" value="ALT_INIT"/>
    <property type="molecule type" value="Genomic_DNA"/>
</dbReference>
<dbReference type="SMR" id="Q2NW25"/>
<dbReference type="STRING" id="343509.SG0375"/>
<dbReference type="KEGG" id="sgl:SG0375"/>
<dbReference type="eggNOG" id="COG0779">
    <property type="taxonomic scope" value="Bacteria"/>
</dbReference>
<dbReference type="HOGENOM" id="CLU_070525_1_1_6"/>
<dbReference type="Proteomes" id="UP000001932">
    <property type="component" value="Chromosome"/>
</dbReference>
<dbReference type="GO" id="GO:0005829">
    <property type="term" value="C:cytosol"/>
    <property type="evidence" value="ECO:0007669"/>
    <property type="project" value="TreeGrafter"/>
</dbReference>
<dbReference type="GO" id="GO:0000028">
    <property type="term" value="P:ribosomal small subunit assembly"/>
    <property type="evidence" value="ECO:0007669"/>
    <property type="project" value="TreeGrafter"/>
</dbReference>
<dbReference type="GO" id="GO:0006412">
    <property type="term" value="P:translation"/>
    <property type="evidence" value="ECO:0007669"/>
    <property type="project" value="TreeGrafter"/>
</dbReference>
<dbReference type="CDD" id="cd01734">
    <property type="entry name" value="YlxS_C"/>
    <property type="match status" value="1"/>
</dbReference>
<dbReference type="FunFam" id="2.30.30.180:FF:000001">
    <property type="entry name" value="Ribosome maturation factor RimP"/>
    <property type="match status" value="1"/>
</dbReference>
<dbReference type="FunFam" id="3.30.300.70:FF:000001">
    <property type="entry name" value="Ribosome maturation factor RimP"/>
    <property type="match status" value="1"/>
</dbReference>
<dbReference type="Gene3D" id="2.30.30.180">
    <property type="entry name" value="Ribosome maturation factor RimP, C-terminal domain"/>
    <property type="match status" value="1"/>
</dbReference>
<dbReference type="Gene3D" id="3.30.300.70">
    <property type="entry name" value="RimP-like superfamily, N-terminal"/>
    <property type="match status" value="1"/>
</dbReference>
<dbReference type="HAMAP" id="MF_01077">
    <property type="entry name" value="RimP"/>
    <property type="match status" value="1"/>
</dbReference>
<dbReference type="InterPro" id="IPR003728">
    <property type="entry name" value="Ribosome_maturation_RimP"/>
</dbReference>
<dbReference type="InterPro" id="IPR028998">
    <property type="entry name" value="RimP_C"/>
</dbReference>
<dbReference type="InterPro" id="IPR036847">
    <property type="entry name" value="RimP_C_sf"/>
</dbReference>
<dbReference type="InterPro" id="IPR028989">
    <property type="entry name" value="RimP_N"/>
</dbReference>
<dbReference type="InterPro" id="IPR035956">
    <property type="entry name" value="RimP_N_sf"/>
</dbReference>
<dbReference type="NCBIfam" id="NF000927">
    <property type="entry name" value="PRK00092.1-1"/>
    <property type="match status" value="1"/>
</dbReference>
<dbReference type="PANTHER" id="PTHR33867">
    <property type="entry name" value="RIBOSOME MATURATION FACTOR RIMP"/>
    <property type="match status" value="1"/>
</dbReference>
<dbReference type="PANTHER" id="PTHR33867:SF1">
    <property type="entry name" value="RIBOSOME MATURATION FACTOR RIMP"/>
    <property type="match status" value="1"/>
</dbReference>
<dbReference type="Pfam" id="PF17384">
    <property type="entry name" value="DUF150_C"/>
    <property type="match status" value="1"/>
</dbReference>
<dbReference type="Pfam" id="PF02576">
    <property type="entry name" value="RimP_N"/>
    <property type="match status" value="1"/>
</dbReference>
<dbReference type="SUPFAM" id="SSF74942">
    <property type="entry name" value="YhbC-like, C-terminal domain"/>
    <property type="match status" value="1"/>
</dbReference>
<dbReference type="SUPFAM" id="SSF75420">
    <property type="entry name" value="YhbC-like, N-terminal domain"/>
    <property type="match status" value="1"/>
</dbReference>
<gene>
    <name evidence="1" type="primary">rimP</name>
    <name type="ordered locus">SG0375</name>
</gene>